<feature type="signal peptide" evidence="1">
    <location>
        <begin position="1"/>
        <end position="22"/>
    </location>
</feature>
<feature type="propeptide" id="PRO_0000449591" evidence="3">
    <location>
        <begin position="23"/>
        <end position="45"/>
    </location>
</feature>
<feature type="peptide" id="PRO_5004293301" description="Dermaseptin-S6" evidence="3">
    <location>
        <begin position="46"/>
        <end position="78"/>
    </location>
</feature>
<feature type="propeptide" id="PRO_0000449592" evidence="3">
    <location>
        <begin position="80"/>
        <end position="81"/>
    </location>
</feature>
<feature type="region of interest" description="Disordered" evidence="2">
    <location>
        <begin position="22"/>
        <end position="49"/>
    </location>
</feature>
<feature type="compositionally biased region" description="Acidic residues" evidence="2">
    <location>
        <begin position="30"/>
        <end position="41"/>
    </location>
</feature>
<feature type="modified residue" description="Isoleucine amide" evidence="3">
    <location>
        <position position="78"/>
    </location>
</feature>
<sequence>MDILKKSLFFILFLGLVSLSISEEEKRENEDEEDQEDDEQSEEKRGLWSKIKTAGKEAAKAAAKAAGKAALNAVSEAIGEQ</sequence>
<name>DRS6_PHYSA</name>
<evidence type="ECO:0000255" key="1"/>
<evidence type="ECO:0000256" key="2">
    <source>
        <dbReference type="SAM" id="MobiDB-lite"/>
    </source>
</evidence>
<evidence type="ECO:0000269" key="3">
    <source>
    </source>
</evidence>
<evidence type="ECO:0000303" key="4">
    <source>
    </source>
</evidence>
<evidence type="ECO:0000303" key="5">
    <source>
    </source>
</evidence>
<evidence type="ECO:0000305" key="6"/>
<evidence type="ECO:0000305" key="7">
    <source>
    </source>
</evidence>
<dbReference type="EMBL" id="AJ564791">
    <property type="protein sequence ID" value="CAD92229.1"/>
    <property type="molecule type" value="mRNA"/>
</dbReference>
<dbReference type="SMR" id="Q7T3K9"/>
<dbReference type="GO" id="GO:0005576">
    <property type="term" value="C:extracellular region"/>
    <property type="evidence" value="ECO:0007669"/>
    <property type="project" value="UniProtKB-SubCell"/>
</dbReference>
<dbReference type="GO" id="GO:0045087">
    <property type="term" value="P:innate immune response"/>
    <property type="evidence" value="ECO:0007669"/>
    <property type="project" value="UniProtKB-KW"/>
</dbReference>
<dbReference type="InterPro" id="IPR004275">
    <property type="entry name" value="Frog_antimicrobial_propeptide"/>
</dbReference>
<dbReference type="Pfam" id="PF03032">
    <property type="entry name" value="FSAP_sig_propep"/>
    <property type="match status" value="1"/>
</dbReference>
<organism>
    <name type="scientific">Phyllomedusa sauvagei</name>
    <name type="common">Sauvage's leaf frog</name>
    <dbReference type="NCBI Taxonomy" id="8395"/>
    <lineage>
        <taxon>Eukaryota</taxon>
        <taxon>Metazoa</taxon>
        <taxon>Chordata</taxon>
        <taxon>Craniata</taxon>
        <taxon>Vertebrata</taxon>
        <taxon>Euteleostomi</taxon>
        <taxon>Amphibia</taxon>
        <taxon>Batrachia</taxon>
        <taxon>Anura</taxon>
        <taxon>Neobatrachia</taxon>
        <taxon>Hyloidea</taxon>
        <taxon>Hylidae</taxon>
        <taxon>Phyllomedusinae</taxon>
        <taxon>Phyllomedusa</taxon>
    </lineage>
</organism>
<accession>Q7T3K9</accession>
<proteinExistence type="evidence at protein level"/>
<keyword id="KW-0027">Amidation</keyword>
<keyword id="KW-0878">Amphibian defense peptide</keyword>
<keyword id="KW-0929">Antimicrobial</keyword>
<keyword id="KW-0165">Cleavage on pair of basic residues</keyword>
<keyword id="KW-0903">Direct protein sequencing</keyword>
<keyword id="KW-0391">Immunity</keyword>
<keyword id="KW-0399">Innate immunity</keyword>
<keyword id="KW-0964">Secreted</keyword>
<keyword id="KW-0732">Signal</keyword>
<reference key="1">
    <citation type="journal article" date="2003" name="Regul. Pept.">
        <title>Identification of three novel Phyllomedusa sauvagei dermaseptins (sVI-sVIII) by cloning from a skin secretion-derived cDNA library.</title>
        <authorList>
            <person name="Chen T."/>
            <person name="Tang L."/>
            <person name="Shaw C."/>
        </authorList>
    </citation>
    <scope>NUCLEOTIDE SEQUENCE [MRNA]</scope>
    <scope>PROTEIN SEQUENCE OF 46-78</scope>
    <scope>AMIDATION AT ILE-78</scope>
    <scope>SUBCELLULAR LOCATION</scope>
    <source>
        <tissue>Skin</tissue>
    </source>
</reference>
<reference key="2">
    <citation type="journal article" date="2008" name="Peptides">
        <title>A consistent nomenclature of antimicrobial peptides isolated from frogs of the subfamily Phyllomedusinae.</title>
        <authorList>
            <person name="Amiche M."/>
            <person name="Ladram A."/>
            <person name="Nicolas P."/>
        </authorList>
    </citation>
    <scope>NOMENCLATURE</scope>
</reference>
<protein>
    <recommendedName>
        <fullName evidence="5">Dermaseptin-S6</fullName>
        <shortName evidence="5">DRS-S6</shortName>
    </recommendedName>
    <alternativeName>
        <fullName evidence="4">Dermaseptin DS VI</fullName>
    </alternativeName>
</protein>
<comment type="function">
    <text evidence="6">Antimicrobial peptide.</text>
</comment>
<comment type="subcellular location">
    <subcellularLocation>
        <location evidence="3">Secreted</location>
    </subcellularLocation>
</comment>
<comment type="tissue specificity">
    <text evidence="7">Expressed by the skin glands.</text>
</comment>
<comment type="similarity">
    <text evidence="6">Belongs to the frog skin active peptide (FSAP) family. Dermaseptin subfamily.</text>
</comment>
<comment type="online information" name="The antimicrobial peptide database">
    <link uri="https://wangapd3.com/database/query_output.php?ID=0933"/>
</comment>